<organism>
    <name type="scientific">Cupriavidus pinatubonensis (strain JMP 134 / LMG 1197)</name>
    <name type="common">Cupriavidus necator (strain JMP 134)</name>
    <dbReference type="NCBI Taxonomy" id="264198"/>
    <lineage>
        <taxon>Bacteria</taxon>
        <taxon>Pseudomonadati</taxon>
        <taxon>Pseudomonadota</taxon>
        <taxon>Betaproteobacteria</taxon>
        <taxon>Burkholderiales</taxon>
        <taxon>Burkholderiaceae</taxon>
        <taxon>Cupriavidus</taxon>
    </lineage>
</organism>
<accession>Q46RR4</accession>
<comment type="function">
    <text evidence="1">Catalyzes the reversible interconversion of serine and glycine with tetrahydrofolate (THF) serving as the one-carbon carrier. This reaction serves as the major source of one-carbon groups required for the biosynthesis of purines, thymidylate, methionine, and other important biomolecules. Also exhibits THF-independent aldolase activity toward beta-hydroxyamino acids, producing glycine and aldehydes, via a retro-aldol mechanism.</text>
</comment>
<comment type="catalytic activity">
    <reaction evidence="1">
        <text>(6R)-5,10-methylene-5,6,7,8-tetrahydrofolate + glycine + H2O = (6S)-5,6,7,8-tetrahydrofolate + L-serine</text>
        <dbReference type="Rhea" id="RHEA:15481"/>
        <dbReference type="ChEBI" id="CHEBI:15377"/>
        <dbReference type="ChEBI" id="CHEBI:15636"/>
        <dbReference type="ChEBI" id="CHEBI:33384"/>
        <dbReference type="ChEBI" id="CHEBI:57305"/>
        <dbReference type="ChEBI" id="CHEBI:57453"/>
        <dbReference type="EC" id="2.1.2.1"/>
    </reaction>
</comment>
<comment type="cofactor">
    <cofactor evidence="1">
        <name>pyridoxal 5'-phosphate</name>
        <dbReference type="ChEBI" id="CHEBI:597326"/>
    </cofactor>
</comment>
<comment type="pathway">
    <text evidence="1">One-carbon metabolism; tetrahydrofolate interconversion.</text>
</comment>
<comment type="pathway">
    <text evidence="1">Amino-acid biosynthesis; glycine biosynthesis; glycine from L-serine: step 1/1.</text>
</comment>
<comment type="subunit">
    <text evidence="1">Homodimer.</text>
</comment>
<comment type="subcellular location">
    <subcellularLocation>
        <location evidence="1">Cytoplasm</location>
    </subcellularLocation>
</comment>
<comment type="similarity">
    <text evidence="1">Belongs to the SHMT family.</text>
</comment>
<proteinExistence type="inferred from homology"/>
<name>GLYA2_CUPPJ</name>
<dbReference type="EC" id="2.1.2.1" evidence="1"/>
<dbReference type="EMBL" id="CP000091">
    <property type="protein sequence ID" value="AAZ64170.1"/>
    <property type="molecule type" value="Genomic_DNA"/>
</dbReference>
<dbReference type="SMR" id="Q46RR4"/>
<dbReference type="STRING" id="264198.Reut_B4822"/>
<dbReference type="KEGG" id="reu:Reut_B4822"/>
<dbReference type="eggNOG" id="COG0112">
    <property type="taxonomic scope" value="Bacteria"/>
</dbReference>
<dbReference type="HOGENOM" id="CLU_022477_2_1_4"/>
<dbReference type="OrthoDB" id="9803846at2"/>
<dbReference type="UniPathway" id="UPA00193"/>
<dbReference type="UniPathway" id="UPA00288">
    <property type="reaction ID" value="UER01023"/>
</dbReference>
<dbReference type="GO" id="GO:0005829">
    <property type="term" value="C:cytosol"/>
    <property type="evidence" value="ECO:0007669"/>
    <property type="project" value="TreeGrafter"/>
</dbReference>
<dbReference type="GO" id="GO:0004372">
    <property type="term" value="F:glycine hydroxymethyltransferase activity"/>
    <property type="evidence" value="ECO:0007669"/>
    <property type="project" value="UniProtKB-UniRule"/>
</dbReference>
<dbReference type="GO" id="GO:0030170">
    <property type="term" value="F:pyridoxal phosphate binding"/>
    <property type="evidence" value="ECO:0007669"/>
    <property type="project" value="UniProtKB-UniRule"/>
</dbReference>
<dbReference type="GO" id="GO:0019264">
    <property type="term" value="P:glycine biosynthetic process from serine"/>
    <property type="evidence" value="ECO:0007669"/>
    <property type="project" value="UniProtKB-UniRule"/>
</dbReference>
<dbReference type="GO" id="GO:0035999">
    <property type="term" value="P:tetrahydrofolate interconversion"/>
    <property type="evidence" value="ECO:0007669"/>
    <property type="project" value="UniProtKB-UniRule"/>
</dbReference>
<dbReference type="CDD" id="cd00378">
    <property type="entry name" value="SHMT"/>
    <property type="match status" value="1"/>
</dbReference>
<dbReference type="FunFam" id="3.40.640.10:FF:000001">
    <property type="entry name" value="Serine hydroxymethyltransferase"/>
    <property type="match status" value="1"/>
</dbReference>
<dbReference type="Gene3D" id="3.90.1150.10">
    <property type="entry name" value="Aspartate Aminotransferase, domain 1"/>
    <property type="match status" value="1"/>
</dbReference>
<dbReference type="Gene3D" id="3.40.640.10">
    <property type="entry name" value="Type I PLP-dependent aspartate aminotransferase-like (Major domain)"/>
    <property type="match status" value="1"/>
</dbReference>
<dbReference type="HAMAP" id="MF_00051">
    <property type="entry name" value="SHMT"/>
    <property type="match status" value="1"/>
</dbReference>
<dbReference type="InterPro" id="IPR015424">
    <property type="entry name" value="PyrdxlP-dep_Trfase"/>
</dbReference>
<dbReference type="InterPro" id="IPR015421">
    <property type="entry name" value="PyrdxlP-dep_Trfase_major"/>
</dbReference>
<dbReference type="InterPro" id="IPR015422">
    <property type="entry name" value="PyrdxlP-dep_Trfase_small"/>
</dbReference>
<dbReference type="InterPro" id="IPR001085">
    <property type="entry name" value="Ser_HO-MeTrfase"/>
</dbReference>
<dbReference type="InterPro" id="IPR049943">
    <property type="entry name" value="Ser_HO-MeTrfase-like"/>
</dbReference>
<dbReference type="InterPro" id="IPR019798">
    <property type="entry name" value="Ser_HO-MeTrfase_PLP_BS"/>
</dbReference>
<dbReference type="InterPro" id="IPR039429">
    <property type="entry name" value="SHMT-like_dom"/>
</dbReference>
<dbReference type="NCBIfam" id="NF000586">
    <property type="entry name" value="PRK00011.1"/>
    <property type="match status" value="1"/>
</dbReference>
<dbReference type="PANTHER" id="PTHR11680">
    <property type="entry name" value="SERINE HYDROXYMETHYLTRANSFERASE"/>
    <property type="match status" value="1"/>
</dbReference>
<dbReference type="PANTHER" id="PTHR11680:SF35">
    <property type="entry name" value="SERINE HYDROXYMETHYLTRANSFERASE 1"/>
    <property type="match status" value="1"/>
</dbReference>
<dbReference type="Pfam" id="PF00464">
    <property type="entry name" value="SHMT"/>
    <property type="match status" value="1"/>
</dbReference>
<dbReference type="PIRSF" id="PIRSF000412">
    <property type="entry name" value="SHMT"/>
    <property type="match status" value="1"/>
</dbReference>
<dbReference type="SUPFAM" id="SSF53383">
    <property type="entry name" value="PLP-dependent transferases"/>
    <property type="match status" value="1"/>
</dbReference>
<dbReference type="PROSITE" id="PS00096">
    <property type="entry name" value="SHMT"/>
    <property type="match status" value="1"/>
</dbReference>
<sequence length="424" mass="45617">MSNTQSFFSQPLAERDALVRGALSKELERQQSQVELIASENIVSRAVLEAQGSVLTNKYAEGYPGKRYYGGCKFADEVESLAIERVKQLFNAGFANVQPHSGAQANGSVMLALTKPGDTVLGMSLDAGGHLTHGAKPALSGKWFNAVQYGVNRESMLIDYDQVEALAKEHKPSLIIAGFSAYPRQLDFARFRAIADSVGAKLMVDMAHIAGVIAAGRHSNPVDYAHVVTSTTHKTLRGPRGGFVLTNHEEIAKKINSAVFPGLQGGPLMHVIAAKAVAFGEAMTSDFRTYIDNVLANAKALGEVLKEGGVDLVTGGTDNHLLLVDLRPKGLKGTQVEQALERAGITCNKNGIPFDTEKPTITSGIRLGAPAATTRGFGVAEFREIGRLILEVFEALRANPEGDAVTEQRVRQQIFALCDRFPIY</sequence>
<protein>
    <recommendedName>
        <fullName evidence="1">Serine hydroxymethyltransferase 2</fullName>
        <shortName evidence="1">SHMT 2</shortName>
        <shortName evidence="1">Serine methylase 2</shortName>
        <ecNumber evidence="1">2.1.2.1</ecNumber>
    </recommendedName>
</protein>
<feature type="chain" id="PRO_0000235013" description="Serine hydroxymethyltransferase 2">
    <location>
        <begin position="1"/>
        <end position="424"/>
    </location>
</feature>
<feature type="binding site" evidence="1">
    <location>
        <position position="125"/>
    </location>
    <ligand>
        <name>(6S)-5,6,7,8-tetrahydrofolate</name>
        <dbReference type="ChEBI" id="CHEBI:57453"/>
    </ligand>
</feature>
<feature type="binding site" evidence="1">
    <location>
        <begin position="129"/>
        <end position="131"/>
    </location>
    <ligand>
        <name>(6S)-5,6,7,8-tetrahydrofolate</name>
        <dbReference type="ChEBI" id="CHEBI:57453"/>
    </ligand>
</feature>
<feature type="binding site" evidence="1">
    <location>
        <position position="250"/>
    </location>
    <ligand>
        <name>(6S)-5,6,7,8-tetrahydrofolate</name>
        <dbReference type="ChEBI" id="CHEBI:57453"/>
    </ligand>
</feature>
<feature type="site" description="Plays an important role in substrate specificity" evidence="1">
    <location>
        <position position="233"/>
    </location>
</feature>
<feature type="modified residue" description="N6-(pyridoxal phosphate)lysine" evidence="1">
    <location>
        <position position="234"/>
    </location>
</feature>
<reference key="1">
    <citation type="journal article" date="2010" name="PLoS ONE">
        <title>The complete multipartite genome sequence of Cupriavidus necator JMP134, a versatile pollutant degrader.</title>
        <authorList>
            <person name="Lykidis A."/>
            <person name="Perez-Pantoja D."/>
            <person name="Ledger T."/>
            <person name="Mavromatis K."/>
            <person name="Anderson I.J."/>
            <person name="Ivanova N.N."/>
            <person name="Hooper S.D."/>
            <person name="Lapidus A."/>
            <person name="Lucas S."/>
            <person name="Gonzalez B."/>
            <person name="Kyrpides N.C."/>
        </authorList>
    </citation>
    <scope>NUCLEOTIDE SEQUENCE [LARGE SCALE GENOMIC DNA]</scope>
    <source>
        <strain>JMP134 / LMG 1197</strain>
    </source>
</reference>
<gene>
    <name evidence="1" type="primary">glyA2</name>
    <name type="ordered locus">Reut_B4822</name>
</gene>
<evidence type="ECO:0000255" key="1">
    <source>
        <dbReference type="HAMAP-Rule" id="MF_00051"/>
    </source>
</evidence>
<keyword id="KW-0028">Amino-acid biosynthesis</keyword>
<keyword id="KW-0963">Cytoplasm</keyword>
<keyword id="KW-0554">One-carbon metabolism</keyword>
<keyword id="KW-0663">Pyridoxal phosphate</keyword>
<keyword id="KW-0808">Transferase</keyword>